<keyword id="KW-0143">Chaperone</keyword>
<protein>
    <recommendedName>
        <fullName evidence="1">Co-chaperone protein HscB homolog</fullName>
    </recommendedName>
</protein>
<proteinExistence type="inferred from homology"/>
<accession>A3NBA1</accession>
<gene>
    <name evidence="1" type="primary">hscB</name>
    <name type="ordered locus">BURPS668_2596</name>
</gene>
<dbReference type="EMBL" id="CP000570">
    <property type="protein sequence ID" value="ABN83439.1"/>
    <property type="molecule type" value="Genomic_DNA"/>
</dbReference>
<dbReference type="RefSeq" id="WP_004202016.1">
    <property type="nucleotide sequence ID" value="NC_009074.1"/>
</dbReference>
<dbReference type="SMR" id="A3NBA1"/>
<dbReference type="GeneID" id="93060843"/>
<dbReference type="KEGG" id="bpd:BURPS668_2596"/>
<dbReference type="HOGENOM" id="CLU_068529_2_1_4"/>
<dbReference type="GO" id="GO:1990230">
    <property type="term" value="C:iron-sulfur cluster transfer complex"/>
    <property type="evidence" value="ECO:0007669"/>
    <property type="project" value="TreeGrafter"/>
</dbReference>
<dbReference type="GO" id="GO:0001671">
    <property type="term" value="F:ATPase activator activity"/>
    <property type="evidence" value="ECO:0007669"/>
    <property type="project" value="InterPro"/>
</dbReference>
<dbReference type="GO" id="GO:0051087">
    <property type="term" value="F:protein-folding chaperone binding"/>
    <property type="evidence" value="ECO:0007669"/>
    <property type="project" value="InterPro"/>
</dbReference>
<dbReference type="GO" id="GO:0044571">
    <property type="term" value="P:[2Fe-2S] cluster assembly"/>
    <property type="evidence" value="ECO:0007669"/>
    <property type="project" value="InterPro"/>
</dbReference>
<dbReference type="GO" id="GO:0051259">
    <property type="term" value="P:protein complex oligomerization"/>
    <property type="evidence" value="ECO:0007669"/>
    <property type="project" value="InterPro"/>
</dbReference>
<dbReference type="GO" id="GO:0006457">
    <property type="term" value="P:protein folding"/>
    <property type="evidence" value="ECO:0007669"/>
    <property type="project" value="UniProtKB-UniRule"/>
</dbReference>
<dbReference type="CDD" id="cd06257">
    <property type="entry name" value="DnaJ"/>
    <property type="match status" value="1"/>
</dbReference>
<dbReference type="Gene3D" id="1.10.287.110">
    <property type="entry name" value="DnaJ domain"/>
    <property type="match status" value="1"/>
</dbReference>
<dbReference type="Gene3D" id="1.20.1280.20">
    <property type="entry name" value="HscB, C-terminal domain"/>
    <property type="match status" value="1"/>
</dbReference>
<dbReference type="HAMAP" id="MF_00682">
    <property type="entry name" value="HscB"/>
    <property type="match status" value="1"/>
</dbReference>
<dbReference type="InterPro" id="IPR001623">
    <property type="entry name" value="DnaJ_domain"/>
</dbReference>
<dbReference type="InterPro" id="IPR004640">
    <property type="entry name" value="HscB"/>
</dbReference>
<dbReference type="InterPro" id="IPR036386">
    <property type="entry name" value="HscB_C_sf"/>
</dbReference>
<dbReference type="InterPro" id="IPR009073">
    <property type="entry name" value="HscB_oligo_C"/>
</dbReference>
<dbReference type="InterPro" id="IPR036869">
    <property type="entry name" value="J_dom_sf"/>
</dbReference>
<dbReference type="NCBIfam" id="TIGR00714">
    <property type="entry name" value="hscB"/>
    <property type="match status" value="1"/>
</dbReference>
<dbReference type="NCBIfam" id="NF002935">
    <property type="entry name" value="PRK03578.1"/>
    <property type="match status" value="1"/>
</dbReference>
<dbReference type="PANTHER" id="PTHR14021">
    <property type="entry name" value="IRON-SULFUR CLUSTER CO-CHAPERONE PROTEIN HSCB"/>
    <property type="match status" value="1"/>
</dbReference>
<dbReference type="PANTHER" id="PTHR14021:SF15">
    <property type="entry name" value="IRON-SULFUR CLUSTER CO-CHAPERONE PROTEIN HSCB"/>
    <property type="match status" value="1"/>
</dbReference>
<dbReference type="Pfam" id="PF07743">
    <property type="entry name" value="HSCB_C"/>
    <property type="match status" value="1"/>
</dbReference>
<dbReference type="SMART" id="SM00271">
    <property type="entry name" value="DnaJ"/>
    <property type="match status" value="1"/>
</dbReference>
<dbReference type="SUPFAM" id="SSF46565">
    <property type="entry name" value="Chaperone J-domain"/>
    <property type="match status" value="1"/>
</dbReference>
<dbReference type="SUPFAM" id="SSF47144">
    <property type="entry name" value="HSC20 (HSCB), C-terminal oligomerisation domain"/>
    <property type="match status" value="1"/>
</dbReference>
<dbReference type="PROSITE" id="PS50076">
    <property type="entry name" value="DNAJ_2"/>
    <property type="match status" value="1"/>
</dbReference>
<sequence>MVSLKDSHFDLFHLPARFALDEPTLDAAYRAVQSQVHPDRFAAAGDAQKRIAMQWATRANEAYQTLRDPLKRATYLLHLRGVDVGAENNTAMEPAFLMQQMEWRERIEDAAGAKNVDALDALLAELRDERRARLAKLGALLDSGSDQGAAEAVRQLMFVERVSAEIGAQIERLEH</sequence>
<feature type="chain" id="PRO_1000083000" description="Co-chaperone protein HscB homolog">
    <location>
        <begin position="1"/>
        <end position="175"/>
    </location>
</feature>
<feature type="domain" description="J" evidence="1">
    <location>
        <begin position="7"/>
        <end position="79"/>
    </location>
</feature>
<name>HSCB_BURP6</name>
<reference key="1">
    <citation type="journal article" date="2010" name="Genome Biol. Evol.">
        <title>Continuing evolution of Burkholderia mallei through genome reduction and large-scale rearrangements.</title>
        <authorList>
            <person name="Losada L."/>
            <person name="Ronning C.M."/>
            <person name="DeShazer D."/>
            <person name="Woods D."/>
            <person name="Fedorova N."/>
            <person name="Kim H.S."/>
            <person name="Shabalina S.A."/>
            <person name="Pearson T.R."/>
            <person name="Brinkac L."/>
            <person name="Tan P."/>
            <person name="Nandi T."/>
            <person name="Crabtree J."/>
            <person name="Badger J."/>
            <person name="Beckstrom-Sternberg S."/>
            <person name="Saqib M."/>
            <person name="Schutzer S.E."/>
            <person name="Keim P."/>
            <person name="Nierman W.C."/>
        </authorList>
    </citation>
    <scope>NUCLEOTIDE SEQUENCE [LARGE SCALE GENOMIC DNA]</scope>
    <source>
        <strain>668</strain>
    </source>
</reference>
<comment type="function">
    <text evidence="1">Co-chaperone involved in the maturation of iron-sulfur cluster-containing proteins. Seems to help targeting proteins to be folded toward HscA.</text>
</comment>
<comment type="subunit">
    <text evidence="1">Interacts with HscA and stimulates its ATPase activity.</text>
</comment>
<comment type="similarity">
    <text evidence="1">Belongs to the HscB family.</text>
</comment>
<evidence type="ECO:0000255" key="1">
    <source>
        <dbReference type="HAMAP-Rule" id="MF_00682"/>
    </source>
</evidence>
<organism>
    <name type="scientific">Burkholderia pseudomallei (strain 668)</name>
    <dbReference type="NCBI Taxonomy" id="320373"/>
    <lineage>
        <taxon>Bacteria</taxon>
        <taxon>Pseudomonadati</taxon>
        <taxon>Pseudomonadota</taxon>
        <taxon>Betaproteobacteria</taxon>
        <taxon>Burkholderiales</taxon>
        <taxon>Burkholderiaceae</taxon>
        <taxon>Burkholderia</taxon>
        <taxon>pseudomallei group</taxon>
    </lineage>
</organism>